<accession>Q7NUE5</accession>
<name>NUOB2_CHRVO</name>
<gene>
    <name evidence="2" type="primary">nuoB2</name>
    <name type="ordered locus">CV_2755</name>
</gene>
<protein>
    <recommendedName>
        <fullName evidence="2">NADH-quinone oxidoreductase subunit B 2</fullName>
        <ecNumber evidence="2">7.1.1.-</ecNumber>
    </recommendedName>
    <alternativeName>
        <fullName evidence="2">NADH dehydrogenase I subunit B 2</fullName>
    </alternativeName>
    <alternativeName>
        <fullName evidence="2">NDH-1 subunit B 2</fullName>
    </alternativeName>
</protein>
<proteinExistence type="inferred from homology"/>
<dbReference type="EC" id="7.1.1.-" evidence="2"/>
<dbReference type="EMBL" id="AE016825">
    <property type="protein sequence ID" value="AAQ60423.1"/>
    <property type="molecule type" value="Genomic_DNA"/>
</dbReference>
<dbReference type="RefSeq" id="WP_011136302.1">
    <property type="nucleotide sequence ID" value="NC_005085.1"/>
</dbReference>
<dbReference type="SMR" id="Q7NUE5"/>
<dbReference type="STRING" id="243365.CV_2755"/>
<dbReference type="GeneID" id="66368461"/>
<dbReference type="KEGG" id="cvi:CV_2755"/>
<dbReference type="eggNOG" id="COG0377">
    <property type="taxonomic scope" value="Bacteria"/>
</dbReference>
<dbReference type="HOGENOM" id="CLU_055737_7_3_4"/>
<dbReference type="OrthoDB" id="9786737at2"/>
<dbReference type="Proteomes" id="UP000001424">
    <property type="component" value="Chromosome"/>
</dbReference>
<dbReference type="GO" id="GO:0005886">
    <property type="term" value="C:plasma membrane"/>
    <property type="evidence" value="ECO:0007669"/>
    <property type="project" value="UniProtKB-SubCell"/>
</dbReference>
<dbReference type="GO" id="GO:0045271">
    <property type="term" value="C:respiratory chain complex I"/>
    <property type="evidence" value="ECO:0007669"/>
    <property type="project" value="TreeGrafter"/>
</dbReference>
<dbReference type="GO" id="GO:0051539">
    <property type="term" value="F:4 iron, 4 sulfur cluster binding"/>
    <property type="evidence" value="ECO:0007669"/>
    <property type="project" value="UniProtKB-KW"/>
</dbReference>
<dbReference type="GO" id="GO:0005506">
    <property type="term" value="F:iron ion binding"/>
    <property type="evidence" value="ECO:0007669"/>
    <property type="project" value="UniProtKB-UniRule"/>
</dbReference>
<dbReference type="GO" id="GO:0008137">
    <property type="term" value="F:NADH dehydrogenase (ubiquinone) activity"/>
    <property type="evidence" value="ECO:0007669"/>
    <property type="project" value="InterPro"/>
</dbReference>
<dbReference type="GO" id="GO:0050136">
    <property type="term" value="F:NADH:ubiquinone reductase (non-electrogenic) activity"/>
    <property type="evidence" value="ECO:0007669"/>
    <property type="project" value="UniProtKB-UniRule"/>
</dbReference>
<dbReference type="GO" id="GO:0048038">
    <property type="term" value="F:quinone binding"/>
    <property type="evidence" value="ECO:0007669"/>
    <property type="project" value="UniProtKB-KW"/>
</dbReference>
<dbReference type="GO" id="GO:0009060">
    <property type="term" value="P:aerobic respiration"/>
    <property type="evidence" value="ECO:0007669"/>
    <property type="project" value="TreeGrafter"/>
</dbReference>
<dbReference type="GO" id="GO:0015990">
    <property type="term" value="P:electron transport coupled proton transport"/>
    <property type="evidence" value="ECO:0007669"/>
    <property type="project" value="TreeGrafter"/>
</dbReference>
<dbReference type="FunFam" id="3.40.50.12280:FF:000001">
    <property type="entry name" value="NADH-quinone oxidoreductase subunit B 2"/>
    <property type="match status" value="1"/>
</dbReference>
<dbReference type="Gene3D" id="3.40.50.12280">
    <property type="match status" value="1"/>
</dbReference>
<dbReference type="HAMAP" id="MF_01356">
    <property type="entry name" value="NDH1_NuoB"/>
    <property type="match status" value="1"/>
</dbReference>
<dbReference type="InterPro" id="IPR006137">
    <property type="entry name" value="NADH_UbQ_OxRdtase-like_20kDa"/>
</dbReference>
<dbReference type="InterPro" id="IPR006138">
    <property type="entry name" value="NADH_UQ_OxRdtase_20Kd_su"/>
</dbReference>
<dbReference type="NCBIfam" id="TIGR01957">
    <property type="entry name" value="nuoB_fam"/>
    <property type="match status" value="1"/>
</dbReference>
<dbReference type="NCBIfam" id="NF005012">
    <property type="entry name" value="PRK06411.1"/>
    <property type="match status" value="1"/>
</dbReference>
<dbReference type="PANTHER" id="PTHR11995">
    <property type="entry name" value="NADH DEHYDROGENASE"/>
    <property type="match status" value="1"/>
</dbReference>
<dbReference type="PANTHER" id="PTHR11995:SF14">
    <property type="entry name" value="NADH DEHYDROGENASE [UBIQUINONE] IRON-SULFUR PROTEIN 7, MITOCHONDRIAL"/>
    <property type="match status" value="1"/>
</dbReference>
<dbReference type="Pfam" id="PF01058">
    <property type="entry name" value="Oxidored_q6"/>
    <property type="match status" value="1"/>
</dbReference>
<dbReference type="SUPFAM" id="SSF56770">
    <property type="entry name" value="HydA/Nqo6-like"/>
    <property type="match status" value="1"/>
</dbReference>
<dbReference type="PROSITE" id="PS01150">
    <property type="entry name" value="COMPLEX1_20K"/>
    <property type="match status" value="1"/>
</dbReference>
<feature type="chain" id="PRO_0000358394" description="NADH-quinone oxidoreductase subunit B 2">
    <location>
        <begin position="1"/>
        <end position="171"/>
    </location>
</feature>
<feature type="binding site" evidence="2">
    <location>
        <position position="37"/>
    </location>
    <ligand>
        <name>[4Fe-4S] cluster</name>
        <dbReference type="ChEBI" id="CHEBI:49883"/>
    </ligand>
</feature>
<feature type="binding site" evidence="2">
    <location>
        <position position="38"/>
    </location>
    <ligand>
        <name>[4Fe-4S] cluster</name>
        <dbReference type="ChEBI" id="CHEBI:49883"/>
    </ligand>
</feature>
<feature type="binding site" evidence="2">
    <location>
        <position position="102"/>
    </location>
    <ligand>
        <name>[4Fe-4S] cluster</name>
        <dbReference type="ChEBI" id="CHEBI:49883"/>
    </ligand>
</feature>
<feature type="binding site" evidence="2">
    <location>
        <position position="132"/>
    </location>
    <ligand>
        <name>[4Fe-4S] cluster</name>
        <dbReference type="ChEBI" id="CHEBI:49883"/>
    </ligand>
</feature>
<comment type="function">
    <text evidence="1">NDH-1 shuttles electrons from NADH, via FMN and iron-sulfur (Fe-S) centers, to quinones in the respiratory chain. Couples the redox reaction to proton translocation (for every two electrons transferred, four hydrogen ions are translocated across the cytoplasmic membrane), and thus conserves the redox energy in a proton gradient (By similarity).</text>
</comment>
<comment type="catalytic activity">
    <reaction evidence="2">
        <text>a quinone + NADH + 5 H(+)(in) = a quinol + NAD(+) + 4 H(+)(out)</text>
        <dbReference type="Rhea" id="RHEA:57888"/>
        <dbReference type="ChEBI" id="CHEBI:15378"/>
        <dbReference type="ChEBI" id="CHEBI:24646"/>
        <dbReference type="ChEBI" id="CHEBI:57540"/>
        <dbReference type="ChEBI" id="CHEBI:57945"/>
        <dbReference type="ChEBI" id="CHEBI:132124"/>
    </reaction>
</comment>
<comment type="cofactor">
    <cofactor evidence="2">
        <name>[4Fe-4S] cluster</name>
        <dbReference type="ChEBI" id="CHEBI:49883"/>
    </cofactor>
    <text evidence="2">Binds 1 [4Fe-4S] cluster.</text>
</comment>
<comment type="subunit">
    <text evidence="2">NDH-1 is composed of 14 different subunits. Subunits NuoB, C, D, E, F, and G constitute the peripheral sector of the complex.</text>
</comment>
<comment type="subcellular location">
    <subcellularLocation>
        <location evidence="2">Cell inner membrane</location>
        <topology evidence="2">Peripheral membrane protein</topology>
        <orientation evidence="2">Cytoplasmic side</orientation>
    </subcellularLocation>
</comment>
<comment type="similarity">
    <text evidence="2">Belongs to the complex I 20 kDa subunit family.</text>
</comment>
<evidence type="ECO:0000250" key="1"/>
<evidence type="ECO:0000255" key="2">
    <source>
        <dbReference type="HAMAP-Rule" id="MF_01356"/>
    </source>
</evidence>
<keyword id="KW-0004">4Fe-4S</keyword>
<keyword id="KW-0997">Cell inner membrane</keyword>
<keyword id="KW-1003">Cell membrane</keyword>
<keyword id="KW-0408">Iron</keyword>
<keyword id="KW-0411">Iron-sulfur</keyword>
<keyword id="KW-0472">Membrane</keyword>
<keyword id="KW-0479">Metal-binding</keyword>
<keyword id="KW-0520">NAD</keyword>
<keyword id="KW-0874">Quinone</keyword>
<keyword id="KW-1185">Reference proteome</keyword>
<keyword id="KW-1278">Translocase</keyword>
<keyword id="KW-0813">Transport</keyword>
<keyword id="KW-0830">Ubiquinone</keyword>
<reference key="1">
    <citation type="journal article" date="2003" name="Proc. Natl. Acad. Sci. U.S.A.">
        <title>The complete genome sequence of Chromobacterium violaceum reveals remarkable and exploitable bacterial adaptability.</title>
        <authorList>
            <person name="Vasconcelos A.T.R."/>
            <person name="de Almeida D.F."/>
            <person name="Hungria M."/>
            <person name="Guimaraes C.T."/>
            <person name="Antonio R.V."/>
            <person name="Almeida F.C."/>
            <person name="de Almeida L.G.P."/>
            <person name="de Almeida R."/>
            <person name="Alves-Gomes J.A."/>
            <person name="Andrade E.M."/>
            <person name="Araripe J."/>
            <person name="de Araujo M.F.F."/>
            <person name="Astolfi-Filho S."/>
            <person name="Azevedo V."/>
            <person name="Baptista A.J."/>
            <person name="Bataus L.A.M."/>
            <person name="Batista J.S."/>
            <person name="Belo A."/>
            <person name="van den Berg C."/>
            <person name="Bogo M."/>
            <person name="Bonatto S."/>
            <person name="Bordignon J."/>
            <person name="Brigido M.M."/>
            <person name="Brito C.A."/>
            <person name="Brocchi M."/>
            <person name="Burity H.A."/>
            <person name="Camargo A.A."/>
            <person name="Cardoso D.D.P."/>
            <person name="Carneiro N.P."/>
            <person name="Carraro D.M."/>
            <person name="Carvalho C.M.B."/>
            <person name="Cascardo J.C.M."/>
            <person name="Cavada B.S."/>
            <person name="Chueire L.M.O."/>
            <person name="Creczynski-Pasa T.B."/>
            <person name="Cunha-Junior N.C."/>
            <person name="Fagundes N."/>
            <person name="Falcao C.L."/>
            <person name="Fantinatti F."/>
            <person name="Farias I.P."/>
            <person name="Felipe M.S.S."/>
            <person name="Ferrari L.P."/>
            <person name="Ferro J.A."/>
            <person name="Ferro M.I.T."/>
            <person name="Franco G.R."/>
            <person name="Freitas N.S.A."/>
            <person name="Furlan L.R."/>
            <person name="Gazzinelli R.T."/>
            <person name="Gomes E.A."/>
            <person name="Goncalves P.R."/>
            <person name="Grangeiro T.B."/>
            <person name="Grattapaglia D."/>
            <person name="Grisard E.C."/>
            <person name="Hanna E.S."/>
            <person name="Jardim S.N."/>
            <person name="Laurino J."/>
            <person name="Leoi L.C.T."/>
            <person name="Lima L.F.A."/>
            <person name="Loureiro M.F."/>
            <person name="Lyra M.C.C.P."/>
            <person name="Madeira H.M.F."/>
            <person name="Manfio G.P."/>
            <person name="Maranhao A.Q."/>
            <person name="Martins W.S."/>
            <person name="di Mauro S.M.Z."/>
            <person name="de Medeiros S.R.B."/>
            <person name="Meissner R.V."/>
            <person name="Moreira M.A.M."/>
            <person name="Nascimento F.F."/>
            <person name="Nicolas M.F."/>
            <person name="Oliveira J.G."/>
            <person name="Oliveira S.C."/>
            <person name="Paixao R.F.C."/>
            <person name="Parente J.A."/>
            <person name="Pedrosa F.O."/>
            <person name="Pena S.D.J."/>
            <person name="Pereira J.O."/>
            <person name="Pereira M."/>
            <person name="Pinto L.S.R.C."/>
            <person name="Pinto L.S."/>
            <person name="Porto J.I.R."/>
            <person name="Potrich D.P."/>
            <person name="Ramalho-Neto C.E."/>
            <person name="Reis A.M.M."/>
            <person name="Rigo L.U."/>
            <person name="Rondinelli E."/>
            <person name="Santos E.B.P."/>
            <person name="Santos F.R."/>
            <person name="Schneider M.P.C."/>
            <person name="Seuanez H.N."/>
            <person name="Silva A.M.R."/>
            <person name="da Silva A.L.C."/>
            <person name="Silva D.W."/>
            <person name="Silva R."/>
            <person name="Simoes I.C."/>
            <person name="Simon D."/>
            <person name="Soares C.M.A."/>
            <person name="Soares R.B.A."/>
            <person name="Souza E.M."/>
            <person name="Souza K.R.L."/>
            <person name="Souza R.C."/>
            <person name="Steffens M.B.R."/>
            <person name="Steindel M."/>
            <person name="Teixeira S.R."/>
            <person name="Urmenyi T."/>
            <person name="Vettore A."/>
            <person name="Wassem R."/>
            <person name="Zaha A."/>
            <person name="Simpson A.J.G."/>
        </authorList>
    </citation>
    <scope>NUCLEOTIDE SEQUENCE [LARGE SCALE GENOMIC DNA]</scope>
    <source>
        <strain>ATCC 12472 / DSM 30191 / JCM 1249 / CCUG 213 / NBRC 12614 / NCIMB 9131 / NCTC 9757 / MK</strain>
    </source>
</reference>
<organism>
    <name type="scientific">Chromobacterium violaceum (strain ATCC 12472 / DSM 30191 / JCM 1249 / CCUG 213 / NBRC 12614 / NCIMB 9131 / NCTC 9757 / MK)</name>
    <dbReference type="NCBI Taxonomy" id="243365"/>
    <lineage>
        <taxon>Bacteria</taxon>
        <taxon>Pseudomonadati</taxon>
        <taxon>Pseudomonadota</taxon>
        <taxon>Betaproteobacteria</taxon>
        <taxon>Neisseriales</taxon>
        <taxon>Chromobacteriaceae</taxon>
        <taxon>Chromobacterium</taxon>
    </lineage>
</organism>
<sequence>MDSPSLEKDGFLLTTLDGLFGRAQSGSLWYLSFGLACCAVEMMHAAAARYDMDRFGWIPRATPRQADLMIVAGTLTNKMAPAMRKVYDQMSEPRYVLSMGSCANGGGYYHYSYAVVRGCDRIVPVDVYVPGCPPTAEALLYGLMQLQAKIRRDDTASRRELLDRSPNRQPN</sequence>